<proteinExistence type="inferred from homology"/>
<protein>
    <recommendedName>
        <fullName evidence="1">Small ribosomal subunit protein uS2c</fullName>
    </recommendedName>
    <alternativeName>
        <fullName>30S ribosomal protein S2, chloroplastic</fullName>
    </alternativeName>
</protein>
<keyword id="KW-0150">Chloroplast</keyword>
<keyword id="KW-0934">Plastid</keyword>
<keyword id="KW-1185">Reference proteome</keyword>
<keyword id="KW-0687">Ribonucleoprotein</keyword>
<keyword id="KW-0689">Ribosomal protein</keyword>
<reference key="1">
    <citation type="journal article" date="2003" name="Nucleic Acids Res.">
        <title>Complete chloroplast DNA sequence of the moss Physcomitrella patens: evidence for the loss and relocation of rpoA from the chloroplast to the nucleus.</title>
        <authorList>
            <person name="Sugiura C."/>
            <person name="Kobayashi Y."/>
            <person name="Setsuyuki A."/>
            <person name="Sugita C."/>
            <person name="Sugita M."/>
        </authorList>
    </citation>
    <scope>NUCLEOTIDE SEQUENCE [LARGE SCALE GENOMIC DNA]</scope>
    <source>
        <strain>cv. Gransden 2004</strain>
    </source>
</reference>
<dbReference type="EMBL" id="AP005672">
    <property type="protein sequence ID" value="BAC85070.1"/>
    <property type="molecule type" value="Genomic_DNA"/>
</dbReference>
<dbReference type="RefSeq" id="NP_904220.1">
    <property type="nucleotide sequence ID" value="NC_005087.2"/>
</dbReference>
<dbReference type="RefSeq" id="YP_009477550.1">
    <property type="nucleotide sequence ID" value="NC_037465.1"/>
</dbReference>
<dbReference type="SMR" id="Q6YXJ9"/>
<dbReference type="FunCoup" id="Q6YXJ9">
    <property type="interactions" value="845"/>
</dbReference>
<dbReference type="STRING" id="3218.Q6YXJ9"/>
<dbReference type="PaxDb" id="3218-PP1S207_90V6.1"/>
<dbReference type="GeneID" id="2546695"/>
<dbReference type="GeneID" id="36487184"/>
<dbReference type="KEGG" id="ppp:2546695"/>
<dbReference type="eggNOG" id="KOG0832">
    <property type="taxonomic scope" value="Eukaryota"/>
</dbReference>
<dbReference type="InParanoid" id="Q6YXJ9"/>
<dbReference type="OrthoDB" id="565471at2759"/>
<dbReference type="Proteomes" id="UP000006727">
    <property type="component" value="Chloroplast"/>
</dbReference>
<dbReference type="GO" id="GO:0009507">
    <property type="term" value="C:chloroplast"/>
    <property type="evidence" value="ECO:0007669"/>
    <property type="project" value="UniProtKB-SubCell"/>
</dbReference>
<dbReference type="GO" id="GO:0005763">
    <property type="term" value="C:mitochondrial small ribosomal subunit"/>
    <property type="evidence" value="ECO:0000318"/>
    <property type="project" value="GO_Central"/>
</dbReference>
<dbReference type="GO" id="GO:0003735">
    <property type="term" value="F:structural constituent of ribosome"/>
    <property type="evidence" value="ECO:0000318"/>
    <property type="project" value="GO_Central"/>
</dbReference>
<dbReference type="GO" id="GO:0006412">
    <property type="term" value="P:translation"/>
    <property type="evidence" value="ECO:0007669"/>
    <property type="project" value="UniProtKB-UniRule"/>
</dbReference>
<dbReference type="CDD" id="cd01425">
    <property type="entry name" value="RPS2"/>
    <property type="match status" value="1"/>
</dbReference>
<dbReference type="FunFam" id="1.10.287.610:FF:000001">
    <property type="entry name" value="30S ribosomal protein S2"/>
    <property type="match status" value="1"/>
</dbReference>
<dbReference type="Gene3D" id="3.40.50.10490">
    <property type="entry name" value="Glucose-6-phosphate isomerase like protein, domain 1"/>
    <property type="match status" value="1"/>
</dbReference>
<dbReference type="Gene3D" id="1.10.287.610">
    <property type="entry name" value="Helix hairpin bin"/>
    <property type="match status" value="1"/>
</dbReference>
<dbReference type="HAMAP" id="MF_00291_B">
    <property type="entry name" value="Ribosomal_uS2_B"/>
    <property type="match status" value="1"/>
</dbReference>
<dbReference type="InterPro" id="IPR001865">
    <property type="entry name" value="Ribosomal_uS2"/>
</dbReference>
<dbReference type="InterPro" id="IPR005706">
    <property type="entry name" value="Ribosomal_uS2_bac/mit/plastid"/>
</dbReference>
<dbReference type="InterPro" id="IPR018130">
    <property type="entry name" value="Ribosomal_uS2_CS"/>
</dbReference>
<dbReference type="InterPro" id="IPR023591">
    <property type="entry name" value="Ribosomal_uS2_flav_dom_sf"/>
</dbReference>
<dbReference type="NCBIfam" id="TIGR01011">
    <property type="entry name" value="rpsB_bact"/>
    <property type="match status" value="1"/>
</dbReference>
<dbReference type="PANTHER" id="PTHR12534">
    <property type="entry name" value="30S RIBOSOMAL PROTEIN S2 PROKARYOTIC AND ORGANELLAR"/>
    <property type="match status" value="1"/>
</dbReference>
<dbReference type="PANTHER" id="PTHR12534:SF0">
    <property type="entry name" value="SMALL RIBOSOMAL SUBUNIT PROTEIN US2M"/>
    <property type="match status" value="1"/>
</dbReference>
<dbReference type="Pfam" id="PF00318">
    <property type="entry name" value="Ribosomal_S2"/>
    <property type="match status" value="1"/>
</dbReference>
<dbReference type="PRINTS" id="PR00395">
    <property type="entry name" value="RIBOSOMALS2"/>
</dbReference>
<dbReference type="SUPFAM" id="SSF52313">
    <property type="entry name" value="Ribosomal protein S2"/>
    <property type="match status" value="1"/>
</dbReference>
<dbReference type="PROSITE" id="PS00962">
    <property type="entry name" value="RIBOSOMAL_S2_1"/>
    <property type="match status" value="1"/>
</dbReference>
<dbReference type="PROSITE" id="PS00963">
    <property type="entry name" value="RIBOSOMAL_S2_2"/>
    <property type="match status" value="1"/>
</dbReference>
<name>RR2_PHYPA</name>
<feature type="chain" id="PRO_0000352149" description="Small ribosomal subunit protein uS2c">
    <location>
        <begin position="1"/>
        <end position="236"/>
    </location>
</feature>
<gene>
    <name type="primary">rps2</name>
</gene>
<organism>
    <name type="scientific">Physcomitrium patens</name>
    <name type="common">Spreading-leaved earth moss</name>
    <name type="synonym">Physcomitrella patens</name>
    <dbReference type="NCBI Taxonomy" id="3218"/>
    <lineage>
        <taxon>Eukaryota</taxon>
        <taxon>Viridiplantae</taxon>
        <taxon>Streptophyta</taxon>
        <taxon>Embryophyta</taxon>
        <taxon>Bryophyta</taxon>
        <taxon>Bryophytina</taxon>
        <taxon>Bryopsida</taxon>
        <taxon>Funariidae</taxon>
        <taxon>Funariales</taxon>
        <taxon>Funariaceae</taxon>
        <taxon>Physcomitrium</taxon>
    </lineage>
</organism>
<comment type="subcellular location">
    <subcellularLocation>
        <location>Plastid</location>
        <location>Chloroplast</location>
    </subcellularLocation>
</comment>
<comment type="similarity">
    <text evidence="1">Belongs to the universal ribosomal protein uS2 family.</text>
</comment>
<accession>Q6YXJ9</accession>
<geneLocation type="chloroplast"/>
<evidence type="ECO:0000305" key="1"/>
<sequence>MKQKSWNINLEEMMQAGVHFGHQARKWNPKMASYIFTERKGIHILNLTQTARFLSEACDLLANASSKGKQVLIVGTKYQAADLVASASIKARCHYINQKWLGGMLTNWSTIEKRLQRFKDLENKEKTGVLNQLPKKEAATLKRQLVQLRKYLGGIKYMTSLPDIVIIIDQQKEITAINECITLGIPTICLVDTDCDPDLTDIPIPANDDARASIRWILNKLTLAISEGRYNSIKTE</sequence>